<feature type="chain" id="PRO_1000137315" description="Redox-sensing transcriptional repressor Rex">
    <location>
        <begin position="1"/>
        <end position="211"/>
    </location>
</feature>
<feature type="DNA-binding region" description="H-T-H motif" evidence="1">
    <location>
        <begin position="18"/>
        <end position="57"/>
    </location>
</feature>
<feature type="binding site" evidence="1">
    <location>
        <begin position="92"/>
        <end position="97"/>
    </location>
    <ligand>
        <name>NAD(+)</name>
        <dbReference type="ChEBI" id="CHEBI:57540"/>
    </ligand>
</feature>
<comment type="function">
    <text evidence="1">Modulates transcription in response to changes in cellular NADH/NAD(+) redox state.</text>
</comment>
<comment type="subunit">
    <text evidence="1">Homodimer.</text>
</comment>
<comment type="subcellular location">
    <subcellularLocation>
        <location evidence="1">Cytoplasm</location>
    </subcellularLocation>
</comment>
<comment type="similarity">
    <text evidence="1">Belongs to the transcriptional regulatory Rex family.</text>
</comment>
<proteinExistence type="inferred from homology"/>
<evidence type="ECO:0000255" key="1">
    <source>
        <dbReference type="HAMAP-Rule" id="MF_01131"/>
    </source>
</evidence>
<keyword id="KW-0963">Cytoplasm</keyword>
<keyword id="KW-0238">DNA-binding</keyword>
<keyword id="KW-0520">NAD</keyword>
<keyword id="KW-0678">Repressor</keyword>
<keyword id="KW-0804">Transcription</keyword>
<keyword id="KW-0805">Transcription regulation</keyword>
<dbReference type="EMBL" id="CP000922">
    <property type="protein sequence ID" value="ACJ32592.1"/>
    <property type="molecule type" value="Genomic_DNA"/>
</dbReference>
<dbReference type="RefSeq" id="WP_006323910.1">
    <property type="nucleotide sequence ID" value="NC_011567.1"/>
</dbReference>
<dbReference type="SMR" id="B7GFQ6"/>
<dbReference type="STRING" id="491915.Aflv_0208"/>
<dbReference type="GeneID" id="7036437"/>
<dbReference type="KEGG" id="afl:Aflv_0208"/>
<dbReference type="eggNOG" id="COG2344">
    <property type="taxonomic scope" value="Bacteria"/>
</dbReference>
<dbReference type="HOGENOM" id="CLU_061534_1_1_9"/>
<dbReference type="Proteomes" id="UP000000742">
    <property type="component" value="Chromosome"/>
</dbReference>
<dbReference type="GO" id="GO:0005737">
    <property type="term" value="C:cytoplasm"/>
    <property type="evidence" value="ECO:0007669"/>
    <property type="project" value="UniProtKB-SubCell"/>
</dbReference>
<dbReference type="GO" id="GO:0003677">
    <property type="term" value="F:DNA binding"/>
    <property type="evidence" value="ECO:0007669"/>
    <property type="project" value="UniProtKB-UniRule"/>
</dbReference>
<dbReference type="GO" id="GO:0003700">
    <property type="term" value="F:DNA-binding transcription factor activity"/>
    <property type="evidence" value="ECO:0007669"/>
    <property type="project" value="UniProtKB-UniRule"/>
</dbReference>
<dbReference type="GO" id="GO:0045892">
    <property type="term" value="P:negative regulation of DNA-templated transcription"/>
    <property type="evidence" value="ECO:0007669"/>
    <property type="project" value="InterPro"/>
</dbReference>
<dbReference type="GO" id="GO:0051775">
    <property type="term" value="P:response to redox state"/>
    <property type="evidence" value="ECO:0007669"/>
    <property type="project" value="InterPro"/>
</dbReference>
<dbReference type="Gene3D" id="3.40.50.720">
    <property type="entry name" value="NAD(P)-binding Rossmann-like Domain"/>
    <property type="match status" value="1"/>
</dbReference>
<dbReference type="Gene3D" id="1.10.10.10">
    <property type="entry name" value="Winged helix-like DNA-binding domain superfamily/Winged helix DNA-binding domain"/>
    <property type="match status" value="1"/>
</dbReference>
<dbReference type="HAMAP" id="MF_01131">
    <property type="entry name" value="Rex"/>
    <property type="match status" value="1"/>
</dbReference>
<dbReference type="InterPro" id="IPR003781">
    <property type="entry name" value="CoA-bd"/>
</dbReference>
<dbReference type="InterPro" id="IPR036291">
    <property type="entry name" value="NAD(P)-bd_dom_sf"/>
</dbReference>
<dbReference type="InterPro" id="IPR009718">
    <property type="entry name" value="Rex_DNA-bd_C_dom"/>
</dbReference>
<dbReference type="InterPro" id="IPR022876">
    <property type="entry name" value="Tscrpt_rep_Rex"/>
</dbReference>
<dbReference type="InterPro" id="IPR036388">
    <property type="entry name" value="WH-like_DNA-bd_sf"/>
</dbReference>
<dbReference type="InterPro" id="IPR036390">
    <property type="entry name" value="WH_DNA-bd_sf"/>
</dbReference>
<dbReference type="NCBIfam" id="NF003989">
    <property type="entry name" value="PRK05472.1-3"/>
    <property type="match status" value="1"/>
</dbReference>
<dbReference type="NCBIfam" id="NF003991">
    <property type="entry name" value="PRK05472.1-5"/>
    <property type="match status" value="1"/>
</dbReference>
<dbReference type="NCBIfam" id="NF003994">
    <property type="entry name" value="PRK05472.2-3"/>
    <property type="match status" value="1"/>
</dbReference>
<dbReference type="NCBIfam" id="NF003995">
    <property type="entry name" value="PRK05472.2-4"/>
    <property type="match status" value="1"/>
</dbReference>
<dbReference type="NCBIfam" id="NF003996">
    <property type="entry name" value="PRK05472.2-5"/>
    <property type="match status" value="1"/>
</dbReference>
<dbReference type="PANTHER" id="PTHR35786">
    <property type="entry name" value="REDOX-SENSING TRANSCRIPTIONAL REPRESSOR REX"/>
    <property type="match status" value="1"/>
</dbReference>
<dbReference type="PANTHER" id="PTHR35786:SF1">
    <property type="entry name" value="REDOX-SENSING TRANSCRIPTIONAL REPRESSOR REX 1"/>
    <property type="match status" value="1"/>
</dbReference>
<dbReference type="Pfam" id="PF02629">
    <property type="entry name" value="CoA_binding"/>
    <property type="match status" value="1"/>
</dbReference>
<dbReference type="Pfam" id="PF06971">
    <property type="entry name" value="Put_DNA-bind_N"/>
    <property type="match status" value="1"/>
</dbReference>
<dbReference type="SMART" id="SM00881">
    <property type="entry name" value="CoA_binding"/>
    <property type="match status" value="1"/>
</dbReference>
<dbReference type="SUPFAM" id="SSF51735">
    <property type="entry name" value="NAD(P)-binding Rossmann-fold domains"/>
    <property type="match status" value="1"/>
</dbReference>
<dbReference type="SUPFAM" id="SSF46785">
    <property type="entry name" value="Winged helix' DNA-binding domain"/>
    <property type="match status" value="1"/>
</dbReference>
<organism>
    <name type="scientific">Anoxybacillus flavithermus (strain DSM 21510 / WK1)</name>
    <dbReference type="NCBI Taxonomy" id="491915"/>
    <lineage>
        <taxon>Bacteria</taxon>
        <taxon>Bacillati</taxon>
        <taxon>Bacillota</taxon>
        <taxon>Bacilli</taxon>
        <taxon>Bacillales</taxon>
        <taxon>Anoxybacillaceae</taxon>
        <taxon>Anoxybacillus</taxon>
    </lineage>
</organism>
<sequence length="211" mass="23594">MNNEQPKIPQATAKRLPLYYRFLKNLHASGKQRVSSAELSEAVKVDSATIRRDFSYFGALGKKGYGYNVNYLLSFFRKTLDQDETTEVALFGVGNLGTAFLNYNFSKNNNTKIVMAFDVDPDKVGTKVGGVPVYHLDELEEKLGGITVAILTVPAQVAQPITDRLVQKGIKGILNFTPARLHVPEHIRVHHIDLAVELQSLVYFLKHYGNE</sequence>
<reference key="1">
    <citation type="journal article" date="2008" name="Genome Biol.">
        <title>Encapsulated in silica: genome, proteome and physiology of the thermophilic bacterium Anoxybacillus flavithermus WK1.</title>
        <authorList>
            <person name="Saw J.H."/>
            <person name="Mountain B.W."/>
            <person name="Feng L."/>
            <person name="Omelchenko M.V."/>
            <person name="Hou S."/>
            <person name="Saito J.A."/>
            <person name="Stott M.B."/>
            <person name="Li D."/>
            <person name="Zhao G."/>
            <person name="Wu J."/>
            <person name="Galperin M.Y."/>
            <person name="Koonin E.V."/>
            <person name="Makarova K.S."/>
            <person name="Wolf Y.I."/>
            <person name="Rigden D.J."/>
            <person name="Dunfield P.F."/>
            <person name="Wang L."/>
            <person name="Alam M."/>
        </authorList>
    </citation>
    <scope>NUCLEOTIDE SEQUENCE [LARGE SCALE GENOMIC DNA]</scope>
    <source>
        <strain>DSM 21510 / WK1</strain>
    </source>
</reference>
<name>REX_ANOFW</name>
<gene>
    <name evidence="1" type="primary">rex</name>
    <name type="ordered locus">Aflv_0208</name>
</gene>
<protein>
    <recommendedName>
        <fullName evidence="1">Redox-sensing transcriptional repressor Rex</fullName>
    </recommendedName>
</protein>
<accession>B7GFQ6</accession>